<sequence length="259" mass="29485">MQNLSAKDFYKPCRYNCETKNQMWMSGIADSHDSWCDCDTPFAHLLASIFPPGHTDRTRTIQEILTRDFRKTCLSGGADATNSGMAETIEEKREDFQKEEKEDFTEEQNIEDLLAAVADAEGRYQTNQLKTQETKTNMMCPIQSKKHYKLLTQQKTLLPRCSMTGTTDGVALHQQLLKECNKTSQLIHLSNLIQTQNQHPRKKDYYQSSTTHKRKRKRSTNVSSLSAKKVHARSRKRRKTSSSSSSSSSSSSRNSSTTS</sequence>
<proteinExistence type="predicted"/>
<evidence type="ECO:0000255" key="1"/>
<evidence type="ECO:0000256" key="2">
    <source>
        <dbReference type="SAM" id="MobiDB-lite"/>
    </source>
</evidence>
<evidence type="ECO:0000305" key="3"/>
<organismHost>
    <name type="scientific">Homo sapiens</name>
    <name type="common">Human</name>
    <dbReference type="NCBI Taxonomy" id="9606"/>
</organismHost>
<feature type="chain" id="PRO_0000404291" description="Uncharacterized ORF3 protein">
    <location>
        <begin position="1"/>
        <end position="259"/>
    </location>
</feature>
<feature type="region of interest" description="Disordered" evidence="2">
    <location>
        <begin position="192"/>
        <end position="259"/>
    </location>
</feature>
<feature type="coiled-coil region" evidence="1">
    <location>
        <begin position="82"/>
        <end position="128"/>
    </location>
</feature>
<feature type="compositionally biased region" description="Basic residues" evidence="2">
    <location>
        <begin position="228"/>
        <end position="240"/>
    </location>
</feature>
<feature type="compositionally biased region" description="Low complexity" evidence="2">
    <location>
        <begin position="241"/>
        <end position="259"/>
    </location>
</feature>
<feature type="splice variant" id="VSP_040550" description="In isoform 2." evidence="3">
    <location>
        <begin position="124"/>
        <end position="259"/>
    </location>
</feature>
<feature type="splice variant" id="VSP_040551" description="In isoform 3." evidence="3">
    <original>YQTNQLKTQETKTNMMCPIQSKKHYKLLTQQKTLLPRCSMTGTTDGVALHQQLLKECNKTSQLIHLSNLIQTQNQHPRKKDYYQSSTTHKRKRKRSTNVSSLSAKKVHARSRKRRKTSSSSSSSSSSSSRNSSTTS</original>
    <variation>TSTQEKKTTTSPPRPTKENGKDQPMSPLSLRRKYMPGAGNGGKHPQAHPAAAAAAAETQAQPLSTNQGLKSETKIITTTNGGTRITLTRFKPGFEQETEKELAQAFNRPPRLFKEDKPFYPWLPRFTPLVNFHLNFKG</variation>
    <location>
        <begin position="124"/>
        <end position="259"/>
    </location>
</feature>
<gene>
    <name type="ORF">ORF3</name>
</gene>
<keyword id="KW-0025">Alternative splicing</keyword>
<keyword id="KW-0175">Coiled coil</keyword>
<keyword id="KW-1185">Reference proteome</keyword>
<comment type="alternative products">
    <event type="alternative splicing"/>
    <isoform>
        <id>A4GZ95-1</id>
        <name>1</name>
        <name>ORF3</name>
        <sequence type="displayed"/>
    </isoform>
    <isoform>
        <id>A4GZ95-2</id>
        <name>2</name>
        <name>ORF2</name>
        <sequence type="described" ref="VSP_040550"/>
    </isoform>
    <isoform>
        <id>A4GZ95-3</id>
        <name>3</name>
        <name>ORF4</name>
        <sequence type="described" ref="VSP_040551"/>
    </isoform>
</comment>
<accession>A4GZ95</accession>
<accession>A4GZ94</accession>
<accession>A4GZ96</accession>
<reference key="1">
    <citation type="journal article" date="2007" name="J. Gen. Virol.">
        <title>Identification and genomic characterization of a novel human torque teno virus of 3.2 kb.</title>
        <authorList>
            <person name="Ninomiya M."/>
            <person name="Nishizawa T."/>
            <person name="Takahashi M."/>
            <person name="Lorenzo F.R."/>
            <person name="Shimosegawa T."/>
            <person name="Okamoto H."/>
        </authorList>
    </citation>
    <scope>NUCLEOTIDE SEQUENCE [GENOMIC DNA] (ISOFORMS 1; 2 AND 3)</scope>
</reference>
<dbReference type="EMBL" id="AB290918">
    <property type="protein sequence ID" value="BAF49424.1"/>
    <property type="molecule type" value="Genomic_DNA"/>
</dbReference>
<dbReference type="EMBL" id="AB290918">
    <property type="protein sequence ID" value="BAF49425.1"/>
    <property type="molecule type" value="Genomic_DNA"/>
</dbReference>
<dbReference type="EMBL" id="AB290918">
    <property type="protein sequence ID" value="BAF49426.1"/>
    <property type="molecule type" value="Genomic_DNA"/>
</dbReference>
<dbReference type="Proteomes" id="UP000007078">
    <property type="component" value="Genome"/>
</dbReference>
<dbReference type="InterPro" id="IPR008474">
    <property type="entry name" value="DUF755"/>
</dbReference>
<dbReference type="InterPro" id="IPR004118">
    <property type="entry name" value="HEV_TT_vir_Orf2/Gyrovir_Vp2_N"/>
</dbReference>
<dbReference type="Pfam" id="PF05501">
    <property type="entry name" value="DUF755"/>
    <property type="match status" value="1"/>
</dbReference>
<dbReference type="Pfam" id="PF02957">
    <property type="entry name" value="TT_ORF2-like"/>
    <property type="match status" value="1"/>
</dbReference>
<name>ORF3_TTVG1</name>
<organism>
    <name type="scientific">Torque teno midi virus 1 (isolate MD1-073)</name>
    <dbReference type="NCBI Taxonomy" id="766184"/>
    <lineage>
        <taxon>Viruses</taxon>
        <taxon>Viruses incertae sedis</taxon>
        <taxon>Anelloviridae</taxon>
        <taxon>Gammatorquevirus</taxon>
        <taxon>Gammatorquevirus homidi1</taxon>
    </lineage>
</organism>
<protein>
    <recommendedName>
        <fullName>Uncharacterized ORF3 protein</fullName>
    </recommendedName>
</protein>